<name>MTNA_DROMO</name>
<proteinExistence type="inferred from homology"/>
<keyword id="KW-0028">Amino-acid biosynthesis</keyword>
<keyword id="KW-0963">Cytoplasm</keyword>
<keyword id="KW-0413">Isomerase</keyword>
<keyword id="KW-0486">Methionine biosynthesis</keyword>
<keyword id="KW-0539">Nucleus</keyword>
<keyword id="KW-1185">Reference proteome</keyword>
<sequence>MSLQSIKYQRGSLEILDQLLLPVVSKYLPVRGVEDGWKVINKMQVRGAPAIAIVGCLSLAVEIYPEEFSSKKSLRQEIEGKLNYLVSARPTAVNMKISADELITLANELTKDDAITVEEMKQRFLKATEAMLEKDIADNRAIGANGAKAILEHVAEATGVATAGPVRVLTHCNTGSLATAGYGTALGVVRNLSELGKLEHVYCTETRPYNQGARLTAYELVHEKLPATLVLDSMVAALLRVKNVAAVVVGADRVAANGDTANKIGTYQIAVVAKHHGVPFYVAAPLTSIDLEIPSGDHIIIEVRPDREMTHVGEHRIAAPGINCWNPAFDVTPASLITGIITEHGVFKPEALKVEITKLLEL</sequence>
<comment type="function">
    <text evidence="1">Catalyzes the interconversion of methylthioribose-1-phosphate (MTR-1-P) into methylthioribulose-1-phosphate (MTRu-1-P).</text>
</comment>
<comment type="catalytic activity">
    <reaction evidence="1">
        <text>5-(methylsulfanyl)-alpha-D-ribose 1-phosphate = 5-(methylsulfanyl)-D-ribulose 1-phosphate</text>
        <dbReference type="Rhea" id="RHEA:19989"/>
        <dbReference type="ChEBI" id="CHEBI:58533"/>
        <dbReference type="ChEBI" id="CHEBI:58548"/>
        <dbReference type="EC" id="5.3.1.23"/>
    </reaction>
</comment>
<comment type="pathway">
    <text evidence="1">Amino-acid biosynthesis; L-methionine biosynthesis via salvage pathway; L-methionine from S-methyl-5-thio-alpha-D-ribose 1-phosphate: step 1/6.</text>
</comment>
<comment type="subcellular location">
    <subcellularLocation>
        <location evidence="1">Cytoplasm</location>
    </subcellularLocation>
    <subcellularLocation>
        <location evidence="1">Nucleus</location>
    </subcellularLocation>
</comment>
<comment type="similarity">
    <text evidence="1">Belongs to the eIF-2B alpha/beta/delta subunits family. MtnA subfamily.</text>
</comment>
<dbReference type="EC" id="5.3.1.23" evidence="1"/>
<dbReference type="EMBL" id="CH933806">
    <property type="protein sequence ID" value="EDW16486.1"/>
    <property type="molecule type" value="Genomic_DNA"/>
</dbReference>
<dbReference type="SMR" id="B4K8A4"/>
<dbReference type="FunCoup" id="B4K8A4">
    <property type="interactions" value="1585"/>
</dbReference>
<dbReference type="EnsemblMetazoa" id="FBtr0161287">
    <property type="protein sequence ID" value="FBpp0159779"/>
    <property type="gene ID" value="FBgn0133326"/>
</dbReference>
<dbReference type="EnsemblMetazoa" id="FBtr0426991">
    <property type="protein sequence ID" value="FBpp0384643"/>
    <property type="gene ID" value="FBgn0133326"/>
</dbReference>
<dbReference type="EnsemblMetazoa" id="XM_002000989.4">
    <property type="protein sequence ID" value="XP_002001025.1"/>
    <property type="gene ID" value="LOC6575001"/>
</dbReference>
<dbReference type="EnsemblMetazoa" id="XM_015167783.3">
    <property type="protein sequence ID" value="XP_015023269.1"/>
    <property type="gene ID" value="LOC6575001"/>
</dbReference>
<dbReference type="GeneID" id="6575001"/>
<dbReference type="KEGG" id="dmo:Dmoj_GI10562"/>
<dbReference type="eggNOG" id="KOG1468">
    <property type="taxonomic scope" value="Eukaryota"/>
</dbReference>
<dbReference type="HOGENOM" id="CLU_016218_1_3_1"/>
<dbReference type="InParanoid" id="B4K8A4"/>
<dbReference type="OMA" id="CETRPLN"/>
<dbReference type="OrthoDB" id="2461at2759"/>
<dbReference type="PhylomeDB" id="B4K8A4"/>
<dbReference type="UniPathway" id="UPA00904">
    <property type="reaction ID" value="UER00874"/>
</dbReference>
<dbReference type="Proteomes" id="UP000009192">
    <property type="component" value="Unassembled WGS sequence"/>
</dbReference>
<dbReference type="GO" id="GO:0005737">
    <property type="term" value="C:cytoplasm"/>
    <property type="evidence" value="ECO:0007669"/>
    <property type="project" value="UniProtKB-SubCell"/>
</dbReference>
<dbReference type="GO" id="GO:0005634">
    <property type="term" value="C:nucleus"/>
    <property type="evidence" value="ECO:0007669"/>
    <property type="project" value="UniProtKB-SubCell"/>
</dbReference>
<dbReference type="GO" id="GO:0046523">
    <property type="term" value="F:S-methyl-5-thioribose-1-phosphate isomerase activity"/>
    <property type="evidence" value="ECO:0007669"/>
    <property type="project" value="UniProtKB-UniRule"/>
</dbReference>
<dbReference type="GO" id="GO:0019509">
    <property type="term" value="P:L-methionine salvage from methylthioadenosine"/>
    <property type="evidence" value="ECO:0007669"/>
    <property type="project" value="UniProtKB-UniRule"/>
</dbReference>
<dbReference type="FunFam" id="1.20.120.420:FF:000010">
    <property type="entry name" value="Methylthioribose-1-phosphate isomerase"/>
    <property type="match status" value="1"/>
</dbReference>
<dbReference type="FunFam" id="3.40.50.10470:FF:000003">
    <property type="entry name" value="Methylthioribose-1-phosphate isomerase"/>
    <property type="match status" value="1"/>
</dbReference>
<dbReference type="Gene3D" id="1.20.120.420">
    <property type="entry name" value="translation initiation factor eif-2b, domain 1"/>
    <property type="match status" value="1"/>
</dbReference>
<dbReference type="Gene3D" id="3.40.50.10470">
    <property type="entry name" value="Translation initiation factor eif-2b, domain 2"/>
    <property type="match status" value="1"/>
</dbReference>
<dbReference type="HAMAP" id="MF_01678">
    <property type="entry name" value="Salvage_MtnA"/>
    <property type="match status" value="1"/>
</dbReference>
<dbReference type="InterPro" id="IPR000649">
    <property type="entry name" value="IF-2B-related"/>
</dbReference>
<dbReference type="InterPro" id="IPR005251">
    <property type="entry name" value="IF-M1Pi"/>
</dbReference>
<dbReference type="InterPro" id="IPR042529">
    <property type="entry name" value="IF_2B-like_C"/>
</dbReference>
<dbReference type="InterPro" id="IPR011559">
    <property type="entry name" value="Initiation_fac_2B_a/b/d"/>
</dbReference>
<dbReference type="InterPro" id="IPR027363">
    <property type="entry name" value="M1Pi_N"/>
</dbReference>
<dbReference type="InterPro" id="IPR037171">
    <property type="entry name" value="NagB/RpiA_transferase-like"/>
</dbReference>
<dbReference type="NCBIfam" id="TIGR00524">
    <property type="entry name" value="eIF-2B_rel"/>
    <property type="match status" value="1"/>
</dbReference>
<dbReference type="NCBIfam" id="NF004326">
    <property type="entry name" value="PRK05720.1"/>
    <property type="match status" value="1"/>
</dbReference>
<dbReference type="NCBIfam" id="TIGR00512">
    <property type="entry name" value="salvage_mtnA"/>
    <property type="match status" value="1"/>
</dbReference>
<dbReference type="PANTHER" id="PTHR43475">
    <property type="entry name" value="METHYLTHIORIBOSE-1-PHOSPHATE ISOMERASE"/>
    <property type="match status" value="1"/>
</dbReference>
<dbReference type="PANTHER" id="PTHR43475:SF1">
    <property type="entry name" value="METHYLTHIORIBOSE-1-PHOSPHATE ISOMERASE"/>
    <property type="match status" value="1"/>
</dbReference>
<dbReference type="Pfam" id="PF01008">
    <property type="entry name" value="IF-2B"/>
    <property type="match status" value="1"/>
</dbReference>
<dbReference type="SUPFAM" id="SSF100950">
    <property type="entry name" value="NagB/RpiA/CoA transferase-like"/>
    <property type="match status" value="1"/>
</dbReference>
<gene>
    <name type="ORF">GI10562</name>
</gene>
<reference key="1">
    <citation type="journal article" date="2007" name="Nature">
        <title>Evolution of genes and genomes on the Drosophila phylogeny.</title>
        <authorList>
            <consortium name="Drosophila 12 genomes consortium"/>
        </authorList>
    </citation>
    <scope>NUCLEOTIDE SEQUENCE [LARGE SCALE GENOMIC DNA]</scope>
    <source>
        <strain>Tucson 15081-1352.22</strain>
    </source>
</reference>
<feature type="chain" id="PRO_0000401979" description="Methylthioribose-1-phosphate isomerase">
    <location>
        <begin position="1"/>
        <end position="362"/>
    </location>
</feature>
<feature type="active site" description="Proton donor" evidence="1">
    <location>
        <position position="252"/>
    </location>
</feature>
<feature type="site" description="Transition state stabilizer" evidence="1">
    <location>
        <position position="172"/>
    </location>
</feature>
<protein>
    <recommendedName>
        <fullName evidence="1">Methylthioribose-1-phosphate isomerase</fullName>
        <shortName evidence="1">M1Pi</shortName>
        <shortName evidence="1">MTR-1-P isomerase</shortName>
        <ecNumber evidence="1">5.3.1.23</ecNumber>
    </recommendedName>
    <alternativeName>
        <fullName evidence="1">S-methyl-5-thioribose-1-phosphate isomerase</fullName>
    </alternativeName>
    <alternativeName>
        <fullName evidence="1">Translation initiation factor eIF-2B subunit alpha/beta/delta-like protein</fullName>
    </alternativeName>
</protein>
<organism>
    <name type="scientific">Drosophila mojavensis</name>
    <name type="common">Fruit fly</name>
    <dbReference type="NCBI Taxonomy" id="7230"/>
    <lineage>
        <taxon>Eukaryota</taxon>
        <taxon>Metazoa</taxon>
        <taxon>Ecdysozoa</taxon>
        <taxon>Arthropoda</taxon>
        <taxon>Hexapoda</taxon>
        <taxon>Insecta</taxon>
        <taxon>Pterygota</taxon>
        <taxon>Neoptera</taxon>
        <taxon>Endopterygota</taxon>
        <taxon>Diptera</taxon>
        <taxon>Brachycera</taxon>
        <taxon>Muscomorpha</taxon>
        <taxon>Ephydroidea</taxon>
        <taxon>Drosophilidae</taxon>
        <taxon>Drosophila</taxon>
    </lineage>
</organism>
<accession>B4K8A4</accession>
<evidence type="ECO:0000255" key="1">
    <source>
        <dbReference type="HAMAP-Rule" id="MF_03119"/>
    </source>
</evidence>